<proteinExistence type="inferred from homology"/>
<organism>
    <name type="scientific">Escherichia coli (strain K12 / DH10B)</name>
    <dbReference type="NCBI Taxonomy" id="316385"/>
    <lineage>
        <taxon>Bacteria</taxon>
        <taxon>Pseudomonadati</taxon>
        <taxon>Pseudomonadota</taxon>
        <taxon>Gammaproteobacteria</taxon>
        <taxon>Enterobacterales</taxon>
        <taxon>Enterobacteriaceae</taxon>
        <taxon>Escherichia</taxon>
    </lineage>
</organism>
<gene>
    <name evidence="1" type="primary">tsaD</name>
    <name type="synonym">gcp</name>
    <name type="ordered locus">ECDH10B_3239</name>
</gene>
<feature type="chain" id="PRO_1000145978" description="tRNA N6-adenosine threonylcarbamoyltransferase">
    <location>
        <begin position="1"/>
        <end position="337"/>
    </location>
</feature>
<feature type="binding site" evidence="1">
    <location>
        <position position="111"/>
    </location>
    <ligand>
        <name>Fe cation</name>
        <dbReference type="ChEBI" id="CHEBI:24875"/>
    </ligand>
</feature>
<feature type="binding site" evidence="1">
    <location>
        <position position="115"/>
    </location>
    <ligand>
        <name>Fe cation</name>
        <dbReference type="ChEBI" id="CHEBI:24875"/>
    </ligand>
</feature>
<feature type="binding site" evidence="1">
    <location>
        <begin position="134"/>
        <end position="138"/>
    </location>
    <ligand>
        <name>substrate</name>
    </ligand>
</feature>
<feature type="binding site" evidence="1">
    <location>
        <position position="167"/>
    </location>
    <ligand>
        <name>substrate</name>
    </ligand>
</feature>
<feature type="binding site" evidence="1">
    <location>
        <position position="180"/>
    </location>
    <ligand>
        <name>substrate</name>
    </ligand>
</feature>
<feature type="binding site" evidence="1">
    <location>
        <position position="272"/>
    </location>
    <ligand>
        <name>substrate</name>
    </ligand>
</feature>
<feature type="binding site" evidence="1">
    <location>
        <position position="300"/>
    </location>
    <ligand>
        <name>Fe cation</name>
        <dbReference type="ChEBI" id="CHEBI:24875"/>
    </ligand>
</feature>
<sequence length="337" mass="36008">MRVLGIETSCDETGIAIYDDEKGLLANQLYSQVKLHADYGGVVPELASRDHVRKTVPLIQAALKESGLTAKDIDAVAYTAGPGLVGALLVGATVGRSLAFAWDVPAIPVHHMEGHLLAPMLEDNPPEFPFVALLVSGGHTQLISVTGIGQYELLGESIDDAAGEAFDKTAKLLGLDYPGGPLLSKMAAQGTAGRFVFPRPMTDRPGLDFSFSGLKTFAANTIRDNGTDDQTRADIARAFEDAVVDTLMIKCKRALDQTGFKRLVMAGGVSANRTLRAKLAEMMKKRRGEVFYARPEFCTDNGAMIAYAGMVRFKAGATADLGVSVRPRWPLAELPAA</sequence>
<name>TSAD_ECODH</name>
<keyword id="KW-0012">Acyltransferase</keyword>
<keyword id="KW-0963">Cytoplasm</keyword>
<keyword id="KW-0408">Iron</keyword>
<keyword id="KW-0479">Metal-binding</keyword>
<keyword id="KW-0808">Transferase</keyword>
<keyword id="KW-0819">tRNA processing</keyword>
<reference key="1">
    <citation type="journal article" date="2008" name="J. Bacteriol.">
        <title>The complete genome sequence of Escherichia coli DH10B: insights into the biology of a laboratory workhorse.</title>
        <authorList>
            <person name="Durfee T."/>
            <person name="Nelson R."/>
            <person name="Baldwin S."/>
            <person name="Plunkett G. III"/>
            <person name="Burland V."/>
            <person name="Mau B."/>
            <person name="Petrosino J.F."/>
            <person name="Qin X."/>
            <person name="Muzny D.M."/>
            <person name="Ayele M."/>
            <person name="Gibbs R.A."/>
            <person name="Csorgo B."/>
            <person name="Posfai G."/>
            <person name="Weinstock G.M."/>
            <person name="Blattner F.R."/>
        </authorList>
    </citation>
    <scope>NUCLEOTIDE SEQUENCE [LARGE SCALE GENOMIC DNA]</scope>
    <source>
        <strain>K12 / DH10B</strain>
    </source>
</reference>
<accession>B1XG69</accession>
<protein>
    <recommendedName>
        <fullName evidence="1">tRNA N6-adenosine threonylcarbamoyltransferase</fullName>
        <ecNumber evidence="1">2.3.1.234</ecNumber>
    </recommendedName>
    <alternativeName>
        <fullName evidence="1">N6-L-threonylcarbamoyladenine synthase</fullName>
        <shortName evidence="1">t(6)A synthase</shortName>
    </alternativeName>
    <alternativeName>
        <fullName evidence="1">t(6)A37 threonylcarbamoyladenosine biosynthesis protein TsaD</fullName>
    </alternativeName>
    <alternativeName>
        <fullName evidence="1">tRNA threonylcarbamoyladenosine biosynthesis protein TsaD</fullName>
    </alternativeName>
</protein>
<dbReference type="EC" id="2.3.1.234" evidence="1"/>
<dbReference type="EMBL" id="CP000948">
    <property type="protein sequence ID" value="ACB04149.1"/>
    <property type="molecule type" value="Genomic_DNA"/>
</dbReference>
<dbReference type="RefSeq" id="WP_001264352.1">
    <property type="nucleotide sequence ID" value="NC_010473.1"/>
</dbReference>
<dbReference type="SMR" id="B1XG69"/>
<dbReference type="GeneID" id="75173186"/>
<dbReference type="KEGG" id="ecd:ECDH10B_3239"/>
<dbReference type="HOGENOM" id="CLU_023208_0_2_6"/>
<dbReference type="GO" id="GO:0005737">
    <property type="term" value="C:cytoplasm"/>
    <property type="evidence" value="ECO:0007669"/>
    <property type="project" value="UniProtKB-SubCell"/>
</dbReference>
<dbReference type="GO" id="GO:0005506">
    <property type="term" value="F:iron ion binding"/>
    <property type="evidence" value="ECO:0007669"/>
    <property type="project" value="UniProtKB-UniRule"/>
</dbReference>
<dbReference type="GO" id="GO:0061711">
    <property type="term" value="F:N(6)-L-threonylcarbamoyladenine synthase activity"/>
    <property type="evidence" value="ECO:0007669"/>
    <property type="project" value="UniProtKB-EC"/>
</dbReference>
<dbReference type="GO" id="GO:0002949">
    <property type="term" value="P:tRNA threonylcarbamoyladenosine modification"/>
    <property type="evidence" value="ECO:0007669"/>
    <property type="project" value="UniProtKB-UniRule"/>
</dbReference>
<dbReference type="CDD" id="cd24097">
    <property type="entry name" value="ASKHA_NBD_TsaD-like"/>
    <property type="match status" value="1"/>
</dbReference>
<dbReference type="FunFam" id="3.30.420.40:FF:000031">
    <property type="entry name" value="tRNA N6-adenosine threonylcarbamoyltransferase"/>
    <property type="match status" value="1"/>
</dbReference>
<dbReference type="Gene3D" id="3.30.420.40">
    <property type="match status" value="2"/>
</dbReference>
<dbReference type="HAMAP" id="MF_01445">
    <property type="entry name" value="TsaD"/>
    <property type="match status" value="1"/>
</dbReference>
<dbReference type="InterPro" id="IPR043129">
    <property type="entry name" value="ATPase_NBD"/>
</dbReference>
<dbReference type="InterPro" id="IPR000905">
    <property type="entry name" value="Gcp-like_dom"/>
</dbReference>
<dbReference type="InterPro" id="IPR017861">
    <property type="entry name" value="KAE1/TsaD"/>
</dbReference>
<dbReference type="InterPro" id="IPR017860">
    <property type="entry name" value="Peptidase_M22_CS"/>
</dbReference>
<dbReference type="InterPro" id="IPR022450">
    <property type="entry name" value="TsaD"/>
</dbReference>
<dbReference type="NCBIfam" id="TIGR00329">
    <property type="entry name" value="gcp_kae1"/>
    <property type="match status" value="1"/>
</dbReference>
<dbReference type="NCBIfam" id="TIGR03723">
    <property type="entry name" value="T6A_TsaD_YgjD"/>
    <property type="match status" value="1"/>
</dbReference>
<dbReference type="PANTHER" id="PTHR11735">
    <property type="entry name" value="TRNA N6-ADENOSINE THREONYLCARBAMOYLTRANSFERASE"/>
    <property type="match status" value="1"/>
</dbReference>
<dbReference type="PANTHER" id="PTHR11735:SF6">
    <property type="entry name" value="TRNA N6-ADENOSINE THREONYLCARBAMOYLTRANSFERASE, MITOCHONDRIAL"/>
    <property type="match status" value="1"/>
</dbReference>
<dbReference type="Pfam" id="PF00814">
    <property type="entry name" value="TsaD"/>
    <property type="match status" value="1"/>
</dbReference>
<dbReference type="PRINTS" id="PR00789">
    <property type="entry name" value="OSIALOPTASE"/>
</dbReference>
<dbReference type="SUPFAM" id="SSF53067">
    <property type="entry name" value="Actin-like ATPase domain"/>
    <property type="match status" value="1"/>
</dbReference>
<dbReference type="PROSITE" id="PS01016">
    <property type="entry name" value="GLYCOPROTEASE"/>
    <property type="match status" value="1"/>
</dbReference>
<evidence type="ECO:0000255" key="1">
    <source>
        <dbReference type="HAMAP-Rule" id="MF_01445"/>
    </source>
</evidence>
<comment type="function">
    <text evidence="1">Required for the formation of a threonylcarbamoyl group on adenosine at position 37 (t(6)A37) in tRNAs that read codons beginning with adenine. Is involved in the transfer of the threonylcarbamoyl moiety of threonylcarbamoyl-AMP (TC-AMP) to the N6 group of A37, together with TsaE and TsaB. TsaD likely plays a direct catalytic role in this reaction.</text>
</comment>
<comment type="catalytic activity">
    <reaction evidence="1">
        <text>L-threonylcarbamoyladenylate + adenosine(37) in tRNA = N(6)-L-threonylcarbamoyladenosine(37) in tRNA + AMP + H(+)</text>
        <dbReference type="Rhea" id="RHEA:37059"/>
        <dbReference type="Rhea" id="RHEA-COMP:10162"/>
        <dbReference type="Rhea" id="RHEA-COMP:10163"/>
        <dbReference type="ChEBI" id="CHEBI:15378"/>
        <dbReference type="ChEBI" id="CHEBI:73682"/>
        <dbReference type="ChEBI" id="CHEBI:74411"/>
        <dbReference type="ChEBI" id="CHEBI:74418"/>
        <dbReference type="ChEBI" id="CHEBI:456215"/>
        <dbReference type="EC" id="2.3.1.234"/>
    </reaction>
</comment>
<comment type="cofactor">
    <cofactor evidence="1">
        <name>Fe(2+)</name>
        <dbReference type="ChEBI" id="CHEBI:29033"/>
    </cofactor>
    <text evidence="1">Binds 1 Fe(2+) ion per subunit.</text>
</comment>
<comment type="subcellular location">
    <subcellularLocation>
        <location evidence="1">Cytoplasm</location>
    </subcellularLocation>
</comment>
<comment type="similarity">
    <text evidence="1">Belongs to the KAE1 / TsaD family.</text>
</comment>